<comment type="function">
    <text evidence="2 3 4 5 6 7 8 9 10 11 12 13">Gamma-glutamyl cyclotransferase-like protein; part of the gene cluster that mediates the biosynthesis of gliotoxin, a member of the epipolythiodioxopiperazine (ETP) class of toxins characterized by a disulfide bridged cyclic dipeptide (PubMed:15979823, PubMed:21612254). The first step in gliotoxin biosynthesis is the condensation of serine and phenylalanine to form the cyclo-L-phenylalanyl-L-serine diketopiperazine (DKP) by the NRPS gliP (PubMed:17154540, PubMed:21612254). GliP is also able to produce the DKP cyclo-L-tryptophanyl-L-serine, suggesting that the substrate specificity of the first adenylation (A) domain in gliP is sufficiently relaxed to accommodate both L-Phe and L-Trp (PubMed:23434416). The cytochrome P450 monooxygenase gliC has been shown to catalyze the subsequent hydroxylation of the alpha-carbon of L-Phe in cyclo-L-phenylalanyl-L-serine whereas the second cytochrome P450 enzyme, gliF, is presumably involved in the modification of the DKP side chain (PubMed:23434416, PubMed:24039048). The glutathione S-transferase (GST) gliG then forms a bis-glutathionylated biosynthetic intermediate which is responsible for the sulfurization of gliotoxin (PubMed:21513890, PubMed:21749092). This bis-glutathionylated intermediate is subsequently processed by the gamma-glutamyl cyclotransferase gliK to remove both gamma-glutamyl moieties (PubMed:22903976, PubMed:24039048). Subsequent processing via gliI yields a biosynthetic intermediate, which is N-methylated via the N-methyltransferase gliN, before the gliotoxin oxidoreductase gliT-mediated disulfide bridge closure (PubMed:20548963, PubMed:22936680, PubMed:24039048, PubMed:25062268). GliN-mediated amide methylation confers stability to ETP, damping the spontaneous formation of tri- and tetrasulfides (PubMed:25062268). Intracellular dithiol gliotoxin oxidized by gliT is subsequently effluxed by gliA (PubMed:26150413). Gliotoxin contributes to pathogenesis during invasive aspergillosis (PubMed:17601876, PubMed:18199036). In macrophages and neutrophils, gliotoxin showed inhibition of various different cell functions including cytokine production, antigen presentation, phagocytosis, and production of reactive oxygen species (PubMed:17601876).</text>
</comment>
<comment type="catalytic activity">
    <reaction evidence="19">
        <text>an alpha-(gamma-L-glutamyl)-L-amino acid = 5-oxo-L-proline + an L-alpha-amino acid</text>
        <dbReference type="Rhea" id="RHEA:20505"/>
        <dbReference type="ChEBI" id="CHEBI:58402"/>
        <dbReference type="ChEBI" id="CHEBI:59869"/>
        <dbReference type="ChEBI" id="CHEBI:71304"/>
        <dbReference type="EC" id="4.3.2.9"/>
    </reaction>
</comment>
<comment type="pathway">
    <text evidence="18">Mycotoxin biosynthesis.</text>
</comment>
<comment type="subcellular location">
    <subcellularLocation>
        <location evidence="1">Membrane</location>
        <topology evidence="1">Single-pass membrane protein</topology>
    </subcellularLocation>
</comment>
<comment type="disruption phenotype">
    <text evidence="8 13">Impairs gliotoxin biosynthesis and accumulates ergothioneine (PubMed:22903976, PubMed:26150413). Also leads to attenuated gliT abundance (PubMed:22903976, PubMed:26150413).</text>
</comment>
<comment type="similarity">
    <text evidence="17">Belongs to the class-I pyridoxal-phosphate-dependent aminotransferase family.</text>
</comment>
<dbReference type="EC" id="4.3.2.9" evidence="19"/>
<dbReference type="EMBL" id="AY838877">
    <property type="protein sequence ID" value="AAW03303.1"/>
    <property type="molecule type" value="Genomic_DNA"/>
</dbReference>
<dbReference type="EMBL" id="AAHF01000006">
    <property type="protein sequence ID" value="EAL88821.2"/>
    <property type="molecule type" value="Genomic_DNA"/>
</dbReference>
<dbReference type="RefSeq" id="XP_750859.2">
    <property type="nucleotide sequence ID" value="XM_745766.2"/>
</dbReference>
<dbReference type="SMR" id="E9R9Y3"/>
<dbReference type="STRING" id="330879.E9R9Y3"/>
<dbReference type="EnsemblFungi" id="EAL88821">
    <property type="protein sequence ID" value="EAL88821"/>
    <property type="gene ID" value="AFUA_6G09700"/>
</dbReference>
<dbReference type="GeneID" id="3508164"/>
<dbReference type="KEGG" id="afm:AFUA_6G09700"/>
<dbReference type="VEuPathDB" id="FungiDB:Afu6g09700"/>
<dbReference type="eggNOG" id="ENOG502SBD2">
    <property type="taxonomic scope" value="Eukaryota"/>
</dbReference>
<dbReference type="HOGENOM" id="CLU_030506_0_0_1"/>
<dbReference type="InParanoid" id="E9R9Y3"/>
<dbReference type="OMA" id="GIWYFAY"/>
<dbReference type="OrthoDB" id="2017317at2759"/>
<dbReference type="BioCyc" id="MetaCyc:MONOMER-18850"/>
<dbReference type="Proteomes" id="UP000002530">
    <property type="component" value="Chromosome 6"/>
</dbReference>
<dbReference type="GO" id="GO:0016020">
    <property type="term" value="C:membrane"/>
    <property type="evidence" value="ECO:0007669"/>
    <property type="project" value="UniProtKB-SubCell"/>
</dbReference>
<dbReference type="GO" id="GO:0003839">
    <property type="term" value="F:gamma-glutamylcyclotransferase activity"/>
    <property type="evidence" value="ECO:0000318"/>
    <property type="project" value="GO_Central"/>
</dbReference>
<dbReference type="GO" id="GO:2001310">
    <property type="term" value="P:gliotoxin biosynthetic process"/>
    <property type="evidence" value="ECO:0000315"/>
    <property type="project" value="AspGD"/>
</dbReference>
<dbReference type="GO" id="GO:0043386">
    <property type="term" value="P:mycotoxin biosynthetic process"/>
    <property type="evidence" value="ECO:0000270"/>
    <property type="project" value="AspGD"/>
</dbReference>
<dbReference type="FunFam" id="3.10.490.10:FF:000023">
    <property type="entry name" value="Gliotoxin biosynthesis protein GliK"/>
    <property type="match status" value="1"/>
</dbReference>
<dbReference type="Gene3D" id="3.10.490.10">
    <property type="entry name" value="Gamma-glutamyl cyclotransferase-like"/>
    <property type="match status" value="1"/>
</dbReference>
<dbReference type="InterPro" id="IPR017939">
    <property type="entry name" value="G-Glutamylcylcotransferase"/>
</dbReference>
<dbReference type="PANTHER" id="PTHR12935">
    <property type="entry name" value="GAMMA-GLUTAMYLCYCLOTRANSFERASE"/>
    <property type="match status" value="1"/>
</dbReference>
<dbReference type="PANTHER" id="PTHR12935:SF0">
    <property type="entry name" value="GAMMA-GLUTAMYLCYCLOTRANSFERASE"/>
    <property type="match status" value="1"/>
</dbReference>
<feature type="chain" id="PRO_0000437727" description="Gamma-glutamyl cyclotransferase gliK">
    <location>
        <begin position="1"/>
        <end position="273"/>
    </location>
</feature>
<feature type="transmembrane region" description="Helical" evidence="1">
    <location>
        <begin position="227"/>
        <end position="243"/>
    </location>
</feature>
<gene>
    <name evidence="14" type="primary">gliK</name>
    <name type="ORF">AFUA_6G09700</name>
</gene>
<keyword id="KW-0456">Lyase</keyword>
<keyword id="KW-0472">Membrane</keyword>
<keyword id="KW-1185">Reference proteome</keyword>
<keyword id="KW-0812">Transmembrane</keyword>
<keyword id="KW-1133">Transmembrane helix</keyword>
<keyword id="KW-0843">Virulence</keyword>
<accession>E9R9Y3</accession>
<accession>Q4WMJ3</accession>
<accession>Q5MBU3</accession>
<organism>
    <name type="scientific">Aspergillus fumigatus (strain ATCC MYA-4609 / CBS 101355 / FGSC A1100 / Af293)</name>
    <name type="common">Neosartorya fumigata</name>
    <dbReference type="NCBI Taxonomy" id="330879"/>
    <lineage>
        <taxon>Eukaryota</taxon>
        <taxon>Fungi</taxon>
        <taxon>Dikarya</taxon>
        <taxon>Ascomycota</taxon>
        <taxon>Pezizomycotina</taxon>
        <taxon>Eurotiomycetes</taxon>
        <taxon>Eurotiomycetidae</taxon>
        <taxon>Eurotiales</taxon>
        <taxon>Aspergillaceae</taxon>
        <taxon>Aspergillus</taxon>
        <taxon>Aspergillus subgen. Fumigati</taxon>
    </lineage>
</organism>
<name>GLIK_ASPFU</name>
<reference key="1">
    <citation type="journal article" date="2005" name="FEMS Microbiol. Lett.">
        <title>Bioinformatic and expression analysis of the putative gliotoxin biosynthetic gene cluster of Aspergillus fumigatus.</title>
        <authorList>
            <person name="Gardiner D.M."/>
            <person name="Howlett B.J."/>
        </authorList>
    </citation>
    <scope>NUCLEOTIDE SEQUENCE [GENOMIC DNA]</scope>
    <scope>FUNCTION</scope>
    <source>
        <strain>ATCC MYA-4609 / CBS 101355 / FGSC A1100 / Af293</strain>
    </source>
</reference>
<reference key="2">
    <citation type="journal article" date="2005" name="Nature">
        <title>Genomic sequence of the pathogenic and allergenic filamentous fungus Aspergillus fumigatus.</title>
        <authorList>
            <person name="Nierman W.C."/>
            <person name="Pain A."/>
            <person name="Anderson M.J."/>
            <person name="Wortman J.R."/>
            <person name="Kim H.S."/>
            <person name="Arroyo J."/>
            <person name="Berriman M."/>
            <person name="Abe K."/>
            <person name="Archer D.B."/>
            <person name="Bermejo C."/>
            <person name="Bennett J.W."/>
            <person name="Bowyer P."/>
            <person name="Chen D."/>
            <person name="Collins M."/>
            <person name="Coulsen R."/>
            <person name="Davies R."/>
            <person name="Dyer P.S."/>
            <person name="Farman M.L."/>
            <person name="Fedorova N."/>
            <person name="Fedorova N.D."/>
            <person name="Feldblyum T.V."/>
            <person name="Fischer R."/>
            <person name="Fosker N."/>
            <person name="Fraser A."/>
            <person name="Garcia J.L."/>
            <person name="Garcia M.J."/>
            <person name="Goble A."/>
            <person name="Goldman G.H."/>
            <person name="Gomi K."/>
            <person name="Griffith-Jones S."/>
            <person name="Gwilliam R."/>
            <person name="Haas B.J."/>
            <person name="Haas H."/>
            <person name="Harris D.E."/>
            <person name="Horiuchi H."/>
            <person name="Huang J."/>
            <person name="Humphray S."/>
            <person name="Jimenez J."/>
            <person name="Keller N."/>
            <person name="Khouri H."/>
            <person name="Kitamoto K."/>
            <person name="Kobayashi T."/>
            <person name="Konzack S."/>
            <person name="Kulkarni R."/>
            <person name="Kumagai T."/>
            <person name="Lafton A."/>
            <person name="Latge J.-P."/>
            <person name="Li W."/>
            <person name="Lord A."/>
            <person name="Lu C."/>
            <person name="Majoros W.H."/>
            <person name="May G.S."/>
            <person name="Miller B.L."/>
            <person name="Mohamoud Y."/>
            <person name="Molina M."/>
            <person name="Monod M."/>
            <person name="Mouyna I."/>
            <person name="Mulligan S."/>
            <person name="Murphy L.D."/>
            <person name="O'Neil S."/>
            <person name="Paulsen I."/>
            <person name="Penalva M.A."/>
            <person name="Pertea M."/>
            <person name="Price C."/>
            <person name="Pritchard B.L."/>
            <person name="Quail M.A."/>
            <person name="Rabbinowitsch E."/>
            <person name="Rawlins N."/>
            <person name="Rajandream M.A."/>
            <person name="Reichard U."/>
            <person name="Renauld H."/>
            <person name="Robson G.D."/>
            <person name="Rodriguez de Cordoba S."/>
            <person name="Rodriguez-Pena J.M."/>
            <person name="Ronning C.M."/>
            <person name="Rutter S."/>
            <person name="Salzberg S.L."/>
            <person name="Sanchez M."/>
            <person name="Sanchez-Ferrero J.C."/>
            <person name="Saunders D."/>
            <person name="Seeger K."/>
            <person name="Squares R."/>
            <person name="Squares S."/>
            <person name="Takeuchi M."/>
            <person name="Tekaia F."/>
            <person name="Turner G."/>
            <person name="Vazquez de Aldana C.R."/>
            <person name="Weidman J."/>
            <person name="White O."/>
            <person name="Woodward J.R."/>
            <person name="Yu J.-H."/>
            <person name="Fraser C.M."/>
            <person name="Galagan J.E."/>
            <person name="Asai K."/>
            <person name="Machida M."/>
            <person name="Hall N."/>
            <person name="Barrell B.G."/>
            <person name="Denning D.W."/>
        </authorList>
    </citation>
    <scope>NUCLEOTIDE SEQUENCE [LARGE SCALE GENOMIC DNA]</scope>
    <source>
        <strain>ATCC MYA-4609 / CBS 101355 / FGSC A1100 / Af293</strain>
    </source>
</reference>
<reference key="3">
    <citation type="journal article" date="2006" name="Biochemistry">
        <title>GliP, a multimodular nonribosomal peptide synthetase in Aspergillus fumigatus, makes the diketopiperazine scaffold of gliotoxin.</title>
        <authorList>
            <person name="Balibar C.J."/>
            <person name="Walsh C.T."/>
        </authorList>
    </citation>
    <scope>FUNCTION</scope>
</reference>
<reference key="4">
    <citation type="journal article" date="2007" name="Eukaryot. Cell">
        <title>Gliotoxin is a virulence factor of Aspergillus fumigatus: gliP deletion attenuates virulence in mice immunosuppressed with hydrocortisone.</title>
        <authorList>
            <person name="Sugui J.A."/>
            <person name="Pardo J."/>
            <person name="Chang Y.C."/>
            <person name="Zarember K.A."/>
            <person name="Nardone G."/>
            <person name="Galvez E.M."/>
            <person name="Mullbacher A."/>
            <person name="Gallin J.I."/>
            <person name="Simon M.M."/>
            <person name="Kwon-Chung K.J."/>
        </authorList>
    </citation>
    <scope>FUNCTION</scope>
</reference>
<reference key="5">
    <citation type="journal article" date="2008" name="J. Infect. Dis.">
        <title>Gliotoxin production in Aspergillus fumigatus contributes to host-specific differences in virulence.</title>
        <authorList>
            <person name="Spikes S."/>
            <person name="Xu R."/>
            <person name="Nguyen C.K."/>
            <person name="Chamilos G."/>
            <person name="Kontoyiannis D.P."/>
            <person name="Jacobson R.H."/>
            <person name="Ejzykowicz D.E."/>
            <person name="Chiang L.Y."/>
            <person name="Filler S.G."/>
            <person name="May G.S."/>
        </authorList>
    </citation>
    <scope>FUNCTION</scope>
</reference>
<reference key="6">
    <citation type="journal article" date="2010" name="PLoS Pathog.">
        <title>Self-protection against gliotoxin--a component of the gliotoxin biosynthetic cluster, GliT, completely protects Aspergillus fumigatus against exogenous gliotoxin.</title>
        <authorList>
            <person name="Schrettl M."/>
            <person name="Carberry S."/>
            <person name="Kavanagh K."/>
            <person name="Haas H."/>
            <person name="Jones G.W."/>
            <person name="O'Brien J."/>
            <person name="Nolan A."/>
            <person name="Stephens J."/>
            <person name="Fenelon O."/>
            <person name="Doyle S."/>
        </authorList>
    </citation>
    <scope>FUNCTION</scope>
</reference>
<reference key="7">
    <citation type="journal article" date="2011" name="Chem. Biol.">
        <title>The role of glutathione S-transferase GliG in gliotoxin biosynthesis in Aspergillus fumigatus.</title>
        <authorList>
            <person name="Davis C."/>
            <person name="Carberry S."/>
            <person name="Schrettl M."/>
            <person name="Singh I."/>
            <person name="Stephens J.C."/>
            <person name="Barry S.M."/>
            <person name="Kavanagh K."/>
            <person name="Challis G.L."/>
            <person name="Brougham D."/>
            <person name="Doyle S."/>
        </authorList>
    </citation>
    <scope>FUNCTION</scope>
</reference>
<reference key="8">
    <citation type="journal article" date="2011" name="J. Am. Chem. Soc.">
        <title>Identification of cryptic products of the gliotoxin gene cluster using NMR-based comparative metabolomics and a model for gliotoxin biosynthesis.</title>
        <authorList>
            <person name="Forseth R.R."/>
            <person name="Fox E.M."/>
            <person name="Chung D."/>
            <person name="Howlett B.J."/>
            <person name="Keller N.P."/>
            <person name="Schroeder F.C."/>
        </authorList>
    </citation>
    <scope>FUNCTION</scope>
</reference>
<reference key="9">
    <citation type="journal article" date="2011" name="J. Am. Chem. Soc.">
        <title>A dedicated glutathione S-transferase mediates carbon-sulfur bond formation in gliotoxin biosynthesis.</title>
        <authorList>
            <person name="Scharf D.H."/>
            <person name="Remme N."/>
            <person name="Habel A."/>
            <person name="Chankhamjon P."/>
            <person name="Scherlach K."/>
            <person name="Heinekamp T."/>
            <person name="Hortschansky P."/>
            <person name="Brakhage A.A."/>
            <person name="Hertweck C."/>
        </authorList>
    </citation>
    <scope>FUNCTION</scope>
</reference>
<reference key="10">
    <citation type="journal article" date="2012" name="Angew. Chem. Int. Ed.">
        <title>Epidithiol formation by an unprecedented twin carbon-sulfur lyase in the gliotoxin pathway.</title>
        <authorList>
            <person name="Scharf D.H."/>
            <person name="Chankhamjon P."/>
            <person name="Scherlach K."/>
            <person name="Heinekamp T."/>
            <person name="Roth M."/>
            <person name="Brakhage A.A."/>
            <person name="Hertweck C."/>
        </authorList>
    </citation>
    <scope>FUNCTION</scope>
</reference>
<reference key="11">
    <citation type="journal article" date="2012" name="Eukaryot. Cell">
        <title>The Aspergillus fumigatus protein GliK protects against oxidative stress and is essential for gliotoxin biosynthesis.</title>
        <authorList>
            <person name="Gallagher L."/>
            <person name="Owens R.A."/>
            <person name="Dolan S.K."/>
            <person name="O'Keeffe G."/>
            <person name="Schrettl M."/>
            <person name="Kavanagh K."/>
            <person name="Jones G.W."/>
            <person name="Doyle S."/>
        </authorList>
    </citation>
    <scope>FUNCTION</scope>
    <scope>DISRUPTION PHENOTYPE</scope>
</reference>
<reference key="12">
    <citation type="journal article" date="2013" name="Angew. Chem. Int. Ed.">
        <title>Epidithiodiketopiperazine biosynthesis: a four-enzyme cascade converts glutathione conjugates into transannular disulfide bridges.</title>
        <authorList>
            <person name="Scharf D.H."/>
            <person name="Chankhamjon P."/>
            <person name="Scherlach K."/>
            <person name="Heinekamp T."/>
            <person name="Willing K."/>
            <person name="Brakhage A.A."/>
            <person name="Hertweck C."/>
        </authorList>
    </citation>
    <scope>FUNCTION</scope>
</reference>
<reference key="13">
    <citation type="journal article" date="2013" name="Bioorg. Med. Chem. Lett.">
        <title>Reconstitution of the early steps of gliotoxin biosynthesis in Aspergillus nidulans reveals the role of the monooxygenase GliC.</title>
        <authorList>
            <person name="Chang S.L."/>
            <person name="Chiang Y.M."/>
            <person name="Yeh H.H."/>
            <person name="Wu T.K."/>
            <person name="Wang C.C."/>
        </authorList>
    </citation>
    <scope>FUNCTION</scope>
</reference>
<reference key="14">
    <citation type="journal article" date="2014" name="J. Am. Chem. Soc.">
        <title>Opposed effects of enzymatic gliotoxin N- and S-methylations.</title>
        <authorList>
            <person name="Scharf D.H."/>
            <person name="Habel A."/>
            <person name="Heinekamp T."/>
            <person name="Brakhage A.A."/>
            <person name="Hertweck C."/>
        </authorList>
    </citation>
    <scope>FUNCTION</scope>
</reference>
<reference key="15">
    <citation type="journal article" date="2015" name="Eukaryot. Cell">
        <title>Interplay between gliotoxin resistance, secretion, and the methyl/methionine cycle in Aspergillus fumigatus.</title>
        <authorList>
            <person name="Owens R.A."/>
            <person name="O'Keeffe G."/>
            <person name="Smith E.B."/>
            <person name="Dolan S.K."/>
            <person name="Hammel S."/>
            <person name="Sheridan K.J."/>
            <person name="Fitzpatrick D.A."/>
            <person name="Keane T.M."/>
            <person name="Jones G.W."/>
            <person name="Doyle S."/>
        </authorList>
    </citation>
    <scope>FUNCTION</scope>
    <scope>DISRUPTION PHENOTYPE</scope>
</reference>
<sequence length="273" mass="30501">MGKAALQDPHGGIWYFAYGSNLRLSVLENRGIKALDIKAVIVPSHYLTFDIFGIPYAEPSFASVAPFAREKKTTLRLGDSPASRDVPPVQGLAYLLNPRDYRQLVISEGGGVAYDEVEVHASILDKDGKPDPGATLIARTLQAKYPWRPNGAPSARYLGLISTGCKQNEPLTAYSDYIDSLPAYEPPTSLHAKVGGLLFLMFWRPPLRLLIRLIRVNTDQDGHCPQWLGWIILTLYGLMWSYHDNIHSKIWGRGDGRKLHFEETPAKEVPVRH</sequence>
<protein>
    <recommendedName>
        <fullName evidence="15 16">Gamma-glutamyl cyclotransferase gliK</fullName>
        <shortName evidence="15">GGCT gliK</shortName>
        <ecNumber evidence="19">4.3.2.9</ecNumber>
    </recommendedName>
    <alternativeName>
        <fullName evidence="14">Gliotoxin biosynthesis protein K</fullName>
    </alternativeName>
</protein>
<evidence type="ECO:0000255" key="1"/>
<evidence type="ECO:0000269" key="2">
    <source>
    </source>
</evidence>
<evidence type="ECO:0000269" key="3">
    <source>
    </source>
</evidence>
<evidence type="ECO:0000269" key="4">
    <source>
    </source>
</evidence>
<evidence type="ECO:0000269" key="5">
    <source>
    </source>
</evidence>
<evidence type="ECO:0000269" key="6">
    <source>
    </source>
</evidence>
<evidence type="ECO:0000269" key="7">
    <source>
    </source>
</evidence>
<evidence type="ECO:0000269" key="8">
    <source>
    </source>
</evidence>
<evidence type="ECO:0000269" key="9">
    <source>
    </source>
</evidence>
<evidence type="ECO:0000269" key="10">
    <source>
    </source>
</evidence>
<evidence type="ECO:0000269" key="11">
    <source>
    </source>
</evidence>
<evidence type="ECO:0000269" key="12">
    <source>
    </source>
</evidence>
<evidence type="ECO:0000269" key="13">
    <source>
    </source>
</evidence>
<evidence type="ECO:0000303" key="14">
    <source>
    </source>
</evidence>
<evidence type="ECO:0000303" key="15">
    <source>
    </source>
</evidence>
<evidence type="ECO:0000303" key="16">
    <source>
    </source>
</evidence>
<evidence type="ECO:0000305" key="17"/>
<evidence type="ECO:0000305" key="18">
    <source>
    </source>
</evidence>
<evidence type="ECO:0000305" key="19">
    <source>
    </source>
</evidence>
<proteinExistence type="inferred from homology"/>